<reference key="1">
    <citation type="journal article" date="2000" name="Nature">
        <title>DNA sequence of both chromosomes of the cholera pathogen Vibrio cholerae.</title>
        <authorList>
            <person name="Heidelberg J.F."/>
            <person name="Eisen J.A."/>
            <person name="Nelson W.C."/>
            <person name="Clayton R.A."/>
            <person name="Gwinn M.L."/>
            <person name="Dodson R.J."/>
            <person name="Haft D.H."/>
            <person name="Hickey E.K."/>
            <person name="Peterson J.D."/>
            <person name="Umayam L.A."/>
            <person name="Gill S.R."/>
            <person name="Nelson K.E."/>
            <person name="Read T.D."/>
            <person name="Tettelin H."/>
            <person name="Richardson D.L."/>
            <person name="Ermolaeva M.D."/>
            <person name="Vamathevan J.J."/>
            <person name="Bass S."/>
            <person name="Qin H."/>
            <person name="Dragoi I."/>
            <person name="Sellers P."/>
            <person name="McDonald L.A."/>
            <person name="Utterback T.R."/>
            <person name="Fleischmann R.D."/>
            <person name="Nierman W.C."/>
            <person name="White O."/>
            <person name="Salzberg S.L."/>
            <person name="Smith H.O."/>
            <person name="Colwell R.R."/>
            <person name="Mekalanos J.J."/>
            <person name="Venter J.C."/>
            <person name="Fraser C.M."/>
        </authorList>
    </citation>
    <scope>NUCLEOTIDE SEQUENCE [LARGE SCALE GENOMIC DNA]</scope>
    <source>
        <strain>ATCC 39315 / El Tor Inaba N16961</strain>
    </source>
</reference>
<sequence length="286" mass="30650">MTAQNIDGTLISQTVRSEVAARVKARVQAGLRAPGLAVVLVGEDPASQVYVGSKRRACEEVGFVSKSFDLPATASEEALLSLVEELNNDPQIDGILVQLPLPAGMDTTKVLESIHPEKDVDGFHPYNVGRLAQRIPKLRSCTPKGIITLLERYNIPLRGKHAVIVGASNIVGRPMTLELLLAGCTTTTCHRFTQDLEGHIRQADILVVAVGKPNFIPGAWIKEGAVVVDVGINRLDTGKLVGDVEYDVARTRASFITPVPGGVGPMTVASLIENTMMACEQFHTQG</sequence>
<dbReference type="EC" id="1.5.1.5" evidence="1"/>
<dbReference type="EC" id="3.5.4.9" evidence="1"/>
<dbReference type="EMBL" id="AE003852">
    <property type="protein sequence ID" value="AAF95090.1"/>
    <property type="status" value="ALT_INIT"/>
    <property type="molecule type" value="Genomic_DNA"/>
</dbReference>
<dbReference type="PIR" id="H82136">
    <property type="entry name" value="H82136"/>
</dbReference>
<dbReference type="RefSeq" id="NP_231576.1">
    <property type="nucleotide sequence ID" value="NC_002505.1"/>
</dbReference>
<dbReference type="RefSeq" id="WP_000126770.1">
    <property type="nucleotide sequence ID" value="NZ_LT906614.1"/>
</dbReference>
<dbReference type="SMR" id="Q9KQQ6"/>
<dbReference type="STRING" id="243277.VC_1942"/>
<dbReference type="DNASU" id="2613572"/>
<dbReference type="EnsemblBacteria" id="AAF95090">
    <property type="protein sequence ID" value="AAF95090"/>
    <property type="gene ID" value="VC_1942"/>
</dbReference>
<dbReference type="GeneID" id="89514780"/>
<dbReference type="KEGG" id="vch:VC_1942"/>
<dbReference type="PATRIC" id="fig|243277.26.peg.1858"/>
<dbReference type="eggNOG" id="COG0190">
    <property type="taxonomic scope" value="Bacteria"/>
</dbReference>
<dbReference type="HOGENOM" id="CLU_034045_2_1_6"/>
<dbReference type="UniPathway" id="UPA00193"/>
<dbReference type="Proteomes" id="UP000000584">
    <property type="component" value="Chromosome 1"/>
</dbReference>
<dbReference type="GO" id="GO:0005829">
    <property type="term" value="C:cytosol"/>
    <property type="evidence" value="ECO:0000318"/>
    <property type="project" value="GO_Central"/>
</dbReference>
<dbReference type="GO" id="GO:0004477">
    <property type="term" value="F:methenyltetrahydrofolate cyclohydrolase activity"/>
    <property type="evidence" value="ECO:0000318"/>
    <property type="project" value="GO_Central"/>
</dbReference>
<dbReference type="GO" id="GO:0004488">
    <property type="term" value="F:methylenetetrahydrofolate dehydrogenase (NADP+) activity"/>
    <property type="evidence" value="ECO:0000318"/>
    <property type="project" value="GO_Central"/>
</dbReference>
<dbReference type="GO" id="GO:0000105">
    <property type="term" value="P:L-histidine biosynthetic process"/>
    <property type="evidence" value="ECO:0007669"/>
    <property type="project" value="UniProtKB-KW"/>
</dbReference>
<dbReference type="GO" id="GO:0009086">
    <property type="term" value="P:methionine biosynthetic process"/>
    <property type="evidence" value="ECO:0007669"/>
    <property type="project" value="UniProtKB-KW"/>
</dbReference>
<dbReference type="GO" id="GO:0006164">
    <property type="term" value="P:purine nucleotide biosynthetic process"/>
    <property type="evidence" value="ECO:0007669"/>
    <property type="project" value="UniProtKB-KW"/>
</dbReference>
<dbReference type="GO" id="GO:0035999">
    <property type="term" value="P:tetrahydrofolate interconversion"/>
    <property type="evidence" value="ECO:0000318"/>
    <property type="project" value="GO_Central"/>
</dbReference>
<dbReference type="CDD" id="cd01080">
    <property type="entry name" value="NAD_bind_m-THF_DH_Cyclohyd"/>
    <property type="match status" value="1"/>
</dbReference>
<dbReference type="FunFam" id="3.40.50.10860:FF:000001">
    <property type="entry name" value="Bifunctional protein FolD"/>
    <property type="match status" value="1"/>
</dbReference>
<dbReference type="FunFam" id="3.40.50.720:FF:000006">
    <property type="entry name" value="Bifunctional protein FolD"/>
    <property type="match status" value="1"/>
</dbReference>
<dbReference type="Gene3D" id="3.40.50.10860">
    <property type="entry name" value="Leucine Dehydrogenase, chain A, domain 1"/>
    <property type="match status" value="1"/>
</dbReference>
<dbReference type="Gene3D" id="3.40.50.720">
    <property type="entry name" value="NAD(P)-binding Rossmann-like Domain"/>
    <property type="match status" value="1"/>
</dbReference>
<dbReference type="HAMAP" id="MF_01576">
    <property type="entry name" value="THF_DHG_CYH"/>
    <property type="match status" value="1"/>
</dbReference>
<dbReference type="InterPro" id="IPR046346">
    <property type="entry name" value="Aminoacid_DH-like_N_sf"/>
</dbReference>
<dbReference type="InterPro" id="IPR036291">
    <property type="entry name" value="NAD(P)-bd_dom_sf"/>
</dbReference>
<dbReference type="InterPro" id="IPR000672">
    <property type="entry name" value="THF_DH/CycHdrlase"/>
</dbReference>
<dbReference type="InterPro" id="IPR020630">
    <property type="entry name" value="THF_DH/CycHdrlase_cat_dom"/>
</dbReference>
<dbReference type="InterPro" id="IPR020867">
    <property type="entry name" value="THF_DH/CycHdrlase_CS"/>
</dbReference>
<dbReference type="InterPro" id="IPR020631">
    <property type="entry name" value="THF_DH/CycHdrlase_NAD-bd_dom"/>
</dbReference>
<dbReference type="NCBIfam" id="NF008058">
    <property type="entry name" value="PRK10792.1"/>
    <property type="match status" value="1"/>
</dbReference>
<dbReference type="NCBIfam" id="NF010783">
    <property type="entry name" value="PRK14186.1"/>
    <property type="match status" value="1"/>
</dbReference>
<dbReference type="PANTHER" id="PTHR48099:SF5">
    <property type="entry name" value="C-1-TETRAHYDROFOLATE SYNTHASE, CYTOPLASMIC"/>
    <property type="match status" value="1"/>
</dbReference>
<dbReference type="PANTHER" id="PTHR48099">
    <property type="entry name" value="C-1-TETRAHYDROFOLATE SYNTHASE, CYTOPLASMIC-RELATED"/>
    <property type="match status" value="1"/>
</dbReference>
<dbReference type="Pfam" id="PF00763">
    <property type="entry name" value="THF_DHG_CYH"/>
    <property type="match status" value="1"/>
</dbReference>
<dbReference type="Pfam" id="PF02882">
    <property type="entry name" value="THF_DHG_CYH_C"/>
    <property type="match status" value="1"/>
</dbReference>
<dbReference type="PRINTS" id="PR00085">
    <property type="entry name" value="THFDHDRGNASE"/>
</dbReference>
<dbReference type="SUPFAM" id="SSF53223">
    <property type="entry name" value="Aminoacid dehydrogenase-like, N-terminal domain"/>
    <property type="match status" value="1"/>
</dbReference>
<dbReference type="SUPFAM" id="SSF51735">
    <property type="entry name" value="NAD(P)-binding Rossmann-fold domains"/>
    <property type="match status" value="1"/>
</dbReference>
<dbReference type="PROSITE" id="PS00767">
    <property type="entry name" value="THF_DHG_CYH_2"/>
    <property type="match status" value="1"/>
</dbReference>
<keyword id="KW-0028">Amino-acid biosynthesis</keyword>
<keyword id="KW-0368">Histidine biosynthesis</keyword>
<keyword id="KW-0378">Hydrolase</keyword>
<keyword id="KW-0486">Methionine biosynthesis</keyword>
<keyword id="KW-0511">Multifunctional enzyme</keyword>
<keyword id="KW-0521">NADP</keyword>
<keyword id="KW-0554">One-carbon metabolism</keyword>
<keyword id="KW-0560">Oxidoreductase</keyword>
<keyword id="KW-0658">Purine biosynthesis</keyword>
<keyword id="KW-1185">Reference proteome</keyword>
<accession>Q9KQQ6</accession>
<name>FOLD_VIBCH</name>
<protein>
    <recommendedName>
        <fullName evidence="1">Bifunctional protein FolD</fullName>
    </recommendedName>
    <domain>
        <recommendedName>
            <fullName evidence="1">Methylenetetrahydrofolate dehydrogenase</fullName>
            <ecNumber evidence="1">1.5.1.5</ecNumber>
        </recommendedName>
    </domain>
    <domain>
        <recommendedName>
            <fullName evidence="1">Methenyltetrahydrofolate cyclohydrolase</fullName>
            <ecNumber evidence="1">3.5.4.9</ecNumber>
        </recommendedName>
    </domain>
</protein>
<comment type="function">
    <text evidence="1">Catalyzes the oxidation of 5,10-methylenetetrahydrofolate to 5,10-methenyltetrahydrofolate and then the hydrolysis of 5,10-methenyltetrahydrofolate to 10-formyltetrahydrofolate.</text>
</comment>
<comment type="catalytic activity">
    <reaction evidence="1">
        <text>(6R)-5,10-methylene-5,6,7,8-tetrahydrofolate + NADP(+) = (6R)-5,10-methenyltetrahydrofolate + NADPH</text>
        <dbReference type="Rhea" id="RHEA:22812"/>
        <dbReference type="ChEBI" id="CHEBI:15636"/>
        <dbReference type="ChEBI" id="CHEBI:57455"/>
        <dbReference type="ChEBI" id="CHEBI:57783"/>
        <dbReference type="ChEBI" id="CHEBI:58349"/>
        <dbReference type="EC" id="1.5.1.5"/>
    </reaction>
</comment>
<comment type="catalytic activity">
    <reaction evidence="1">
        <text>(6R)-5,10-methenyltetrahydrofolate + H2O = (6R)-10-formyltetrahydrofolate + H(+)</text>
        <dbReference type="Rhea" id="RHEA:23700"/>
        <dbReference type="ChEBI" id="CHEBI:15377"/>
        <dbReference type="ChEBI" id="CHEBI:15378"/>
        <dbReference type="ChEBI" id="CHEBI:57455"/>
        <dbReference type="ChEBI" id="CHEBI:195366"/>
        <dbReference type="EC" id="3.5.4.9"/>
    </reaction>
</comment>
<comment type="pathway">
    <text evidence="1">One-carbon metabolism; tetrahydrofolate interconversion.</text>
</comment>
<comment type="subunit">
    <text evidence="1">Homodimer.</text>
</comment>
<comment type="similarity">
    <text evidence="1">Belongs to the tetrahydrofolate dehydrogenase/cyclohydrolase family.</text>
</comment>
<comment type="sequence caution" evidence="2">
    <conflict type="erroneous initiation">
        <sequence resource="EMBL-CDS" id="AAF95090"/>
    </conflict>
</comment>
<proteinExistence type="inferred from homology"/>
<organism>
    <name type="scientific">Vibrio cholerae serotype O1 (strain ATCC 39315 / El Tor Inaba N16961)</name>
    <dbReference type="NCBI Taxonomy" id="243277"/>
    <lineage>
        <taxon>Bacteria</taxon>
        <taxon>Pseudomonadati</taxon>
        <taxon>Pseudomonadota</taxon>
        <taxon>Gammaproteobacteria</taxon>
        <taxon>Vibrionales</taxon>
        <taxon>Vibrionaceae</taxon>
        <taxon>Vibrio</taxon>
    </lineage>
</organism>
<evidence type="ECO:0000255" key="1">
    <source>
        <dbReference type="HAMAP-Rule" id="MF_01576"/>
    </source>
</evidence>
<evidence type="ECO:0000305" key="2"/>
<feature type="chain" id="PRO_0000268556" description="Bifunctional protein FolD">
    <location>
        <begin position="1"/>
        <end position="286"/>
    </location>
</feature>
<feature type="binding site" evidence="1">
    <location>
        <begin position="166"/>
        <end position="168"/>
    </location>
    <ligand>
        <name>NADP(+)</name>
        <dbReference type="ChEBI" id="CHEBI:58349"/>
    </ligand>
</feature>
<feature type="binding site" evidence="1">
    <location>
        <position position="232"/>
    </location>
    <ligand>
        <name>NADP(+)</name>
        <dbReference type="ChEBI" id="CHEBI:58349"/>
    </ligand>
</feature>
<gene>
    <name evidence="1" type="primary">folD</name>
    <name type="ordered locus">VC_1942</name>
</gene>